<dbReference type="EC" id="6.3.5.2" evidence="1"/>
<dbReference type="EMBL" id="CU928158">
    <property type="protein sequence ID" value="CAQ88211.1"/>
    <property type="molecule type" value="Genomic_DNA"/>
</dbReference>
<dbReference type="RefSeq" id="WP_000138262.1">
    <property type="nucleotide sequence ID" value="NC_011740.1"/>
</dbReference>
<dbReference type="SMR" id="B7LKD4"/>
<dbReference type="MEROPS" id="C26.957"/>
<dbReference type="GeneID" id="75058272"/>
<dbReference type="KEGG" id="efe:EFER_0668"/>
<dbReference type="HOGENOM" id="CLU_014340_0_5_6"/>
<dbReference type="OrthoDB" id="9802219at2"/>
<dbReference type="UniPathway" id="UPA00189">
    <property type="reaction ID" value="UER00296"/>
</dbReference>
<dbReference type="Proteomes" id="UP000000745">
    <property type="component" value="Chromosome"/>
</dbReference>
<dbReference type="GO" id="GO:0005829">
    <property type="term" value="C:cytosol"/>
    <property type="evidence" value="ECO:0007669"/>
    <property type="project" value="TreeGrafter"/>
</dbReference>
<dbReference type="GO" id="GO:0005524">
    <property type="term" value="F:ATP binding"/>
    <property type="evidence" value="ECO:0007669"/>
    <property type="project" value="UniProtKB-UniRule"/>
</dbReference>
<dbReference type="GO" id="GO:0003921">
    <property type="term" value="F:GMP synthase activity"/>
    <property type="evidence" value="ECO:0007669"/>
    <property type="project" value="InterPro"/>
</dbReference>
<dbReference type="CDD" id="cd01742">
    <property type="entry name" value="GATase1_GMP_Synthase"/>
    <property type="match status" value="1"/>
</dbReference>
<dbReference type="CDD" id="cd01997">
    <property type="entry name" value="GMP_synthase_C"/>
    <property type="match status" value="1"/>
</dbReference>
<dbReference type="FunFam" id="3.30.300.10:FF:000002">
    <property type="entry name" value="GMP synthase [glutamine-hydrolyzing]"/>
    <property type="match status" value="1"/>
</dbReference>
<dbReference type="FunFam" id="3.40.50.620:FF:000001">
    <property type="entry name" value="GMP synthase [glutamine-hydrolyzing]"/>
    <property type="match status" value="1"/>
</dbReference>
<dbReference type="FunFam" id="3.40.50.880:FF:000001">
    <property type="entry name" value="GMP synthase [glutamine-hydrolyzing]"/>
    <property type="match status" value="1"/>
</dbReference>
<dbReference type="Gene3D" id="3.30.300.10">
    <property type="match status" value="1"/>
</dbReference>
<dbReference type="Gene3D" id="3.40.50.880">
    <property type="match status" value="1"/>
</dbReference>
<dbReference type="Gene3D" id="3.40.50.620">
    <property type="entry name" value="HUPs"/>
    <property type="match status" value="1"/>
</dbReference>
<dbReference type="HAMAP" id="MF_00344">
    <property type="entry name" value="GMP_synthase"/>
    <property type="match status" value="1"/>
</dbReference>
<dbReference type="InterPro" id="IPR029062">
    <property type="entry name" value="Class_I_gatase-like"/>
</dbReference>
<dbReference type="InterPro" id="IPR017926">
    <property type="entry name" value="GATASE"/>
</dbReference>
<dbReference type="InterPro" id="IPR001674">
    <property type="entry name" value="GMP_synth_C"/>
</dbReference>
<dbReference type="InterPro" id="IPR004739">
    <property type="entry name" value="GMP_synth_GATase"/>
</dbReference>
<dbReference type="InterPro" id="IPR022955">
    <property type="entry name" value="GMP_synthase"/>
</dbReference>
<dbReference type="InterPro" id="IPR025777">
    <property type="entry name" value="GMPS_ATP_PPase_dom"/>
</dbReference>
<dbReference type="InterPro" id="IPR022310">
    <property type="entry name" value="NAD/GMP_synthase"/>
</dbReference>
<dbReference type="InterPro" id="IPR014729">
    <property type="entry name" value="Rossmann-like_a/b/a_fold"/>
</dbReference>
<dbReference type="NCBIfam" id="TIGR00884">
    <property type="entry name" value="guaA_Cterm"/>
    <property type="match status" value="1"/>
</dbReference>
<dbReference type="NCBIfam" id="TIGR00888">
    <property type="entry name" value="guaA_Nterm"/>
    <property type="match status" value="1"/>
</dbReference>
<dbReference type="NCBIfam" id="NF000848">
    <property type="entry name" value="PRK00074.1"/>
    <property type="match status" value="1"/>
</dbReference>
<dbReference type="PANTHER" id="PTHR11922:SF2">
    <property type="entry name" value="GMP SYNTHASE [GLUTAMINE-HYDROLYZING]"/>
    <property type="match status" value="1"/>
</dbReference>
<dbReference type="PANTHER" id="PTHR11922">
    <property type="entry name" value="GMP SYNTHASE-RELATED"/>
    <property type="match status" value="1"/>
</dbReference>
<dbReference type="Pfam" id="PF00117">
    <property type="entry name" value="GATase"/>
    <property type="match status" value="1"/>
</dbReference>
<dbReference type="Pfam" id="PF00958">
    <property type="entry name" value="GMP_synt_C"/>
    <property type="match status" value="1"/>
</dbReference>
<dbReference type="Pfam" id="PF02540">
    <property type="entry name" value="NAD_synthase"/>
    <property type="match status" value="1"/>
</dbReference>
<dbReference type="PRINTS" id="PR00097">
    <property type="entry name" value="ANTSNTHASEII"/>
</dbReference>
<dbReference type="PRINTS" id="PR00099">
    <property type="entry name" value="CPSGATASE"/>
</dbReference>
<dbReference type="PRINTS" id="PR00096">
    <property type="entry name" value="GATASE"/>
</dbReference>
<dbReference type="SUPFAM" id="SSF52402">
    <property type="entry name" value="Adenine nucleotide alpha hydrolases-like"/>
    <property type="match status" value="1"/>
</dbReference>
<dbReference type="SUPFAM" id="SSF52317">
    <property type="entry name" value="Class I glutamine amidotransferase-like"/>
    <property type="match status" value="1"/>
</dbReference>
<dbReference type="SUPFAM" id="SSF54810">
    <property type="entry name" value="GMP synthetase C-terminal dimerisation domain"/>
    <property type="match status" value="1"/>
</dbReference>
<dbReference type="PROSITE" id="PS51273">
    <property type="entry name" value="GATASE_TYPE_1"/>
    <property type="match status" value="1"/>
</dbReference>
<dbReference type="PROSITE" id="PS51553">
    <property type="entry name" value="GMPS_ATP_PPASE"/>
    <property type="match status" value="1"/>
</dbReference>
<gene>
    <name evidence="1" type="primary">guaA</name>
    <name type="ordered locus">EFER_0668</name>
</gene>
<accession>B7LKD4</accession>
<organism>
    <name type="scientific">Escherichia fergusonii (strain ATCC 35469 / DSM 13698 / CCUG 18766 / IAM 14443 / JCM 21226 / LMG 7866 / NBRC 102419 / NCTC 12128 / CDC 0568-73)</name>
    <dbReference type="NCBI Taxonomy" id="585054"/>
    <lineage>
        <taxon>Bacteria</taxon>
        <taxon>Pseudomonadati</taxon>
        <taxon>Pseudomonadota</taxon>
        <taxon>Gammaproteobacteria</taxon>
        <taxon>Enterobacterales</taxon>
        <taxon>Enterobacteriaceae</taxon>
        <taxon>Escherichia</taxon>
    </lineage>
</organism>
<proteinExistence type="inferred from homology"/>
<sequence length="525" mass="58693">MTENIHKHRILILDFGSQYTQLVARRVRELGVYCELWAWDVTEAQIRDFNPSGIILSGGPESTTEENSPRAPQYVFEAGVPVFGICYGMQTMAMQLGGHVEASNEREFGYAQVEVVNDSALVRGIEDALTADGKPLLDVWMSHGDKVTAIPSDFITVASTESCPFAIMANEEKRFYGVQFHPEVTHTRQGMRMLERFVRDICQCEALWTPAKIIDDAVARIREQVGDDKVILGLSGGVDSSVTAMLLHRAIGKNLTCVFVDNGLLRLNEAEQVLDMFGDHFGLNIVHVPAEDRFLSALAGENDPEAKRKIIGRVFVEVFDEEALKLEDVKWLAQGTIYPDVIESAASATGKAHVIKSHHNVGGLPKEMKMGLVEPLKELFKDEVRKIGLELGLPYDMLYRHPFPGPGLGVRVLGEVKKEYCDLLRRADAIFIEELRKADLYDKVSQAFTVFLPVRSVGVMGDGRKYDWVVSLRAVETIDFMTAHWAHLPYDFLGRVSNRIINEVNGISRVVYDISGKPPATIEWE</sequence>
<reference key="1">
    <citation type="journal article" date="2009" name="PLoS Genet.">
        <title>Organised genome dynamics in the Escherichia coli species results in highly diverse adaptive paths.</title>
        <authorList>
            <person name="Touchon M."/>
            <person name="Hoede C."/>
            <person name="Tenaillon O."/>
            <person name="Barbe V."/>
            <person name="Baeriswyl S."/>
            <person name="Bidet P."/>
            <person name="Bingen E."/>
            <person name="Bonacorsi S."/>
            <person name="Bouchier C."/>
            <person name="Bouvet O."/>
            <person name="Calteau A."/>
            <person name="Chiapello H."/>
            <person name="Clermont O."/>
            <person name="Cruveiller S."/>
            <person name="Danchin A."/>
            <person name="Diard M."/>
            <person name="Dossat C."/>
            <person name="Karoui M.E."/>
            <person name="Frapy E."/>
            <person name="Garry L."/>
            <person name="Ghigo J.M."/>
            <person name="Gilles A.M."/>
            <person name="Johnson J."/>
            <person name="Le Bouguenec C."/>
            <person name="Lescat M."/>
            <person name="Mangenot S."/>
            <person name="Martinez-Jehanne V."/>
            <person name="Matic I."/>
            <person name="Nassif X."/>
            <person name="Oztas S."/>
            <person name="Petit M.A."/>
            <person name="Pichon C."/>
            <person name="Rouy Z."/>
            <person name="Ruf C.S."/>
            <person name="Schneider D."/>
            <person name="Tourret J."/>
            <person name="Vacherie B."/>
            <person name="Vallenet D."/>
            <person name="Medigue C."/>
            <person name="Rocha E.P.C."/>
            <person name="Denamur E."/>
        </authorList>
    </citation>
    <scope>NUCLEOTIDE SEQUENCE [LARGE SCALE GENOMIC DNA]</scope>
    <source>
        <strain>ATCC 35469 / DSM 13698 / BCRC 15582 / CCUG 18766 / IAM 14443 / JCM 21226 / LMG 7866 / NBRC 102419 / NCTC 12128 / CDC 0568-73</strain>
    </source>
</reference>
<name>GUAA_ESCF3</name>
<feature type="chain" id="PRO_1000120296" description="GMP synthase [glutamine-hydrolyzing]">
    <location>
        <begin position="1"/>
        <end position="525"/>
    </location>
</feature>
<feature type="domain" description="Glutamine amidotransferase type-1" evidence="1">
    <location>
        <begin position="9"/>
        <end position="207"/>
    </location>
</feature>
<feature type="domain" description="GMPS ATP-PPase" evidence="1">
    <location>
        <begin position="208"/>
        <end position="400"/>
    </location>
</feature>
<feature type="active site" description="Nucleophile" evidence="1">
    <location>
        <position position="86"/>
    </location>
</feature>
<feature type="active site" evidence="1">
    <location>
        <position position="181"/>
    </location>
</feature>
<feature type="active site" evidence="1">
    <location>
        <position position="183"/>
    </location>
</feature>
<feature type="binding site" evidence="1">
    <location>
        <begin position="235"/>
        <end position="241"/>
    </location>
    <ligand>
        <name>ATP</name>
        <dbReference type="ChEBI" id="CHEBI:30616"/>
    </ligand>
</feature>
<keyword id="KW-0067">ATP-binding</keyword>
<keyword id="KW-0315">Glutamine amidotransferase</keyword>
<keyword id="KW-0332">GMP biosynthesis</keyword>
<keyword id="KW-0436">Ligase</keyword>
<keyword id="KW-0547">Nucleotide-binding</keyword>
<keyword id="KW-0658">Purine biosynthesis</keyword>
<evidence type="ECO:0000255" key="1">
    <source>
        <dbReference type="HAMAP-Rule" id="MF_00344"/>
    </source>
</evidence>
<comment type="function">
    <text evidence="1">Catalyzes the synthesis of GMP from XMP.</text>
</comment>
<comment type="catalytic activity">
    <reaction evidence="1">
        <text>XMP + L-glutamine + ATP + H2O = GMP + L-glutamate + AMP + diphosphate + 2 H(+)</text>
        <dbReference type="Rhea" id="RHEA:11680"/>
        <dbReference type="ChEBI" id="CHEBI:15377"/>
        <dbReference type="ChEBI" id="CHEBI:15378"/>
        <dbReference type="ChEBI" id="CHEBI:29985"/>
        <dbReference type="ChEBI" id="CHEBI:30616"/>
        <dbReference type="ChEBI" id="CHEBI:33019"/>
        <dbReference type="ChEBI" id="CHEBI:57464"/>
        <dbReference type="ChEBI" id="CHEBI:58115"/>
        <dbReference type="ChEBI" id="CHEBI:58359"/>
        <dbReference type="ChEBI" id="CHEBI:456215"/>
        <dbReference type="EC" id="6.3.5.2"/>
    </reaction>
</comment>
<comment type="pathway">
    <text evidence="1">Purine metabolism; GMP biosynthesis; GMP from XMP (L-Gln route): step 1/1.</text>
</comment>
<comment type="subunit">
    <text evidence="1">Homodimer.</text>
</comment>
<protein>
    <recommendedName>
        <fullName evidence="1">GMP synthase [glutamine-hydrolyzing]</fullName>
        <ecNumber evidence="1">6.3.5.2</ecNumber>
    </recommendedName>
    <alternativeName>
        <fullName evidence="1">GMP synthetase</fullName>
    </alternativeName>
    <alternativeName>
        <fullName evidence="1">Glutamine amidotransferase</fullName>
    </alternativeName>
</protein>